<gene>
    <name evidence="1" type="primary">rpoC</name>
    <name type="ordered locus">DET0604</name>
</gene>
<protein>
    <recommendedName>
        <fullName evidence="1">DNA-directed RNA polymerase subunit beta'</fullName>
        <shortName evidence="1">RNAP subunit beta'</shortName>
        <ecNumber evidence="1">2.7.7.6</ecNumber>
    </recommendedName>
    <alternativeName>
        <fullName evidence="1">RNA polymerase subunit beta'</fullName>
    </alternativeName>
    <alternativeName>
        <fullName evidence="1">Transcriptase subunit beta'</fullName>
    </alternativeName>
</protein>
<accession>Q3Z8V3</accession>
<evidence type="ECO:0000255" key="1">
    <source>
        <dbReference type="HAMAP-Rule" id="MF_01322"/>
    </source>
</evidence>
<name>RPOC_DEHM1</name>
<comment type="function">
    <text evidence="1">DNA-dependent RNA polymerase catalyzes the transcription of DNA into RNA using the four ribonucleoside triphosphates as substrates.</text>
</comment>
<comment type="catalytic activity">
    <reaction evidence="1">
        <text>RNA(n) + a ribonucleoside 5'-triphosphate = RNA(n+1) + diphosphate</text>
        <dbReference type="Rhea" id="RHEA:21248"/>
        <dbReference type="Rhea" id="RHEA-COMP:14527"/>
        <dbReference type="Rhea" id="RHEA-COMP:17342"/>
        <dbReference type="ChEBI" id="CHEBI:33019"/>
        <dbReference type="ChEBI" id="CHEBI:61557"/>
        <dbReference type="ChEBI" id="CHEBI:140395"/>
        <dbReference type="EC" id="2.7.7.6"/>
    </reaction>
</comment>
<comment type="cofactor">
    <cofactor evidence="1">
        <name>Mg(2+)</name>
        <dbReference type="ChEBI" id="CHEBI:18420"/>
    </cofactor>
    <text evidence="1">Binds 1 Mg(2+) ion per subunit.</text>
</comment>
<comment type="cofactor">
    <cofactor evidence="1">
        <name>Zn(2+)</name>
        <dbReference type="ChEBI" id="CHEBI:29105"/>
    </cofactor>
    <text evidence="1">Binds 2 Zn(2+) ions per subunit.</text>
</comment>
<comment type="subunit">
    <text evidence="1">The RNAP catalytic core consists of 2 alpha, 1 beta, 1 beta' and 1 omega subunit. When a sigma factor is associated with the core the holoenzyme is formed, which can initiate transcription.</text>
</comment>
<comment type="similarity">
    <text evidence="1">Belongs to the RNA polymerase beta' chain family.</text>
</comment>
<organism>
    <name type="scientific">Dehalococcoides mccartyi (strain ATCC BAA-2266 / KCTC 15142 / 195)</name>
    <name type="common">Dehalococcoides ethenogenes (strain 195)</name>
    <dbReference type="NCBI Taxonomy" id="243164"/>
    <lineage>
        <taxon>Bacteria</taxon>
        <taxon>Bacillati</taxon>
        <taxon>Chloroflexota</taxon>
        <taxon>Dehalococcoidia</taxon>
        <taxon>Dehalococcoidales</taxon>
        <taxon>Dehalococcoidaceae</taxon>
        <taxon>Dehalococcoides</taxon>
    </lineage>
</organism>
<feature type="chain" id="PRO_0000225529" description="DNA-directed RNA polymerase subunit beta'">
    <location>
        <begin position="1"/>
        <end position="1295"/>
    </location>
</feature>
<feature type="binding site" evidence="1">
    <location>
        <position position="60"/>
    </location>
    <ligand>
        <name>Zn(2+)</name>
        <dbReference type="ChEBI" id="CHEBI:29105"/>
        <label>1</label>
    </ligand>
</feature>
<feature type="binding site" evidence="1">
    <location>
        <position position="62"/>
    </location>
    <ligand>
        <name>Zn(2+)</name>
        <dbReference type="ChEBI" id="CHEBI:29105"/>
        <label>1</label>
    </ligand>
</feature>
<feature type="binding site" evidence="1">
    <location>
        <position position="75"/>
    </location>
    <ligand>
        <name>Zn(2+)</name>
        <dbReference type="ChEBI" id="CHEBI:29105"/>
        <label>1</label>
    </ligand>
</feature>
<feature type="binding site" evidence="1">
    <location>
        <position position="78"/>
    </location>
    <ligand>
        <name>Zn(2+)</name>
        <dbReference type="ChEBI" id="CHEBI:29105"/>
        <label>1</label>
    </ligand>
</feature>
<feature type="binding site" evidence="1">
    <location>
        <position position="516"/>
    </location>
    <ligand>
        <name>Mg(2+)</name>
        <dbReference type="ChEBI" id="CHEBI:18420"/>
    </ligand>
</feature>
<feature type="binding site" evidence="1">
    <location>
        <position position="518"/>
    </location>
    <ligand>
        <name>Mg(2+)</name>
        <dbReference type="ChEBI" id="CHEBI:18420"/>
    </ligand>
</feature>
<feature type="binding site" evidence="1">
    <location>
        <position position="520"/>
    </location>
    <ligand>
        <name>Mg(2+)</name>
        <dbReference type="ChEBI" id="CHEBI:18420"/>
    </ligand>
</feature>
<feature type="binding site" evidence="1">
    <location>
        <position position="841"/>
    </location>
    <ligand>
        <name>Zn(2+)</name>
        <dbReference type="ChEBI" id="CHEBI:29105"/>
        <label>2</label>
    </ligand>
</feature>
<feature type="binding site" evidence="1">
    <location>
        <position position="914"/>
    </location>
    <ligand>
        <name>Zn(2+)</name>
        <dbReference type="ChEBI" id="CHEBI:29105"/>
        <label>2</label>
    </ligand>
</feature>
<feature type="binding site" evidence="1">
    <location>
        <position position="921"/>
    </location>
    <ligand>
        <name>Zn(2+)</name>
        <dbReference type="ChEBI" id="CHEBI:29105"/>
        <label>2</label>
    </ligand>
</feature>
<feature type="binding site" evidence="1">
    <location>
        <position position="924"/>
    </location>
    <ligand>
        <name>Zn(2+)</name>
        <dbReference type="ChEBI" id="CHEBI:29105"/>
        <label>2</label>
    </ligand>
</feature>
<reference key="1">
    <citation type="journal article" date="2005" name="Science">
        <title>Genome sequence of the PCE-dechlorinating bacterium Dehalococcoides ethenogenes.</title>
        <authorList>
            <person name="Seshadri R."/>
            <person name="Adrian L."/>
            <person name="Fouts D.E."/>
            <person name="Eisen J.A."/>
            <person name="Phillippy A.M."/>
            <person name="Methe B.A."/>
            <person name="Ward N.L."/>
            <person name="Nelson W.C."/>
            <person name="DeBoy R.T."/>
            <person name="Khouri H.M."/>
            <person name="Kolonay J.F."/>
            <person name="Dodson R.J."/>
            <person name="Daugherty S.C."/>
            <person name="Brinkac L.M."/>
            <person name="Sullivan S.A."/>
            <person name="Madupu R."/>
            <person name="Nelson K.E."/>
            <person name="Kang K.H."/>
            <person name="Impraim M."/>
            <person name="Tran K."/>
            <person name="Robinson J.M."/>
            <person name="Forberger H.A."/>
            <person name="Fraser C.M."/>
            <person name="Zinder S.H."/>
            <person name="Heidelberg J.F."/>
        </authorList>
    </citation>
    <scope>NUCLEOTIDE SEQUENCE [LARGE SCALE GENOMIC DNA]</scope>
    <source>
        <strain>ATCC BAA-2266 / KCTC 15142 / 195</strain>
    </source>
</reference>
<proteinExistence type="inferred from homology"/>
<dbReference type="EC" id="2.7.7.6" evidence="1"/>
<dbReference type="EMBL" id="CP000027">
    <property type="protein sequence ID" value="AAW40096.1"/>
    <property type="molecule type" value="Genomic_DNA"/>
</dbReference>
<dbReference type="RefSeq" id="WP_010936379.1">
    <property type="nucleotide sequence ID" value="NC_002936.3"/>
</dbReference>
<dbReference type="SMR" id="Q3Z8V3"/>
<dbReference type="FunCoup" id="Q3Z8V3">
    <property type="interactions" value="302"/>
</dbReference>
<dbReference type="STRING" id="243164.DET0604"/>
<dbReference type="GeneID" id="3230059"/>
<dbReference type="KEGG" id="det:DET0604"/>
<dbReference type="PATRIC" id="fig|243164.10.peg.582"/>
<dbReference type="eggNOG" id="COG0086">
    <property type="taxonomic scope" value="Bacteria"/>
</dbReference>
<dbReference type="HOGENOM" id="CLU_000524_3_1_0"/>
<dbReference type="InParanoid" id="Q3Z8V3"/>
<dbReference type="Proteomes" id="UP000008289">
    <property type="component" value="Chromosome"/>
</dbReference>
<dbReference type="GO" id="GO:0000428">
    <property type="term" value="C:DNA-directed RNA polymerase complex"/>
    <property type="evidence" value="ECO:0007669"/>
    <property type="project" value="UniProtKB-KW"/>
</dbReference>
<dbReference type="GO" id="GO:0003677">
    <property type="term" value="F:DNA binding"/>
    <property type="evidence" value="ECO:0007669"/>
    <property type="project" value="UniProtKB-UniRule"/>
</dbReference>
<dbReference type="GO" id="GO:0003899">
    <property type="term" value="F:DNA-directed RNA polymerase activity"/>
    <property type="evidence" value="ECO:0007669"/>
    <property type="project" value="UniProtKB-UniRule"/>
</dbReference>
<dbReference type="GO" id="GO:0000287">
    <property type="term" value="F:magnesium ion binding"/>
    <property type="evidence" value="ECO:0007669"/>
    <property type="project" value="UniProtKB-UniRule"/>
</dbReference>
<dbReference type="GO" id="GO:0008270">
    <property type="term" value="F:zinc ion binding"/>
    <property type="evidence" value="ECO:0007669"/>
    <property type="project" value="UniProtKB-UniRule"/>
</dbReference>
<dbReference type="GO" id="GO:0006351">
    <property type="term" value="P:DNA-templated transcription"/>
    <property type="evidence" value="ECO:0007669"/>
    <property type="project" value="UniProtKB-UniRule"/>
</dbReference>
<dbReference type="CDD" id="cd02655">
    <property type="entry name" value="RNAP_beta'_C"/>
    <property type="match status" value="1"/>
</dbReference>
<dbReference type="CDD" id="cd01609">
    <property type="entry name" value="RNAP_beta'_N"/>
    <property type="match status" value="1"/>
</dbReference>
<dbReference type="FunFam" id="4.10.860.120:FF:000001">
    <property type="entry name" value="DNA-directed RNA polymerase subunit beta"/>
    <property type="match status" value="1"/>
</dbReference>
<dbReference type="Gene3D" id="1.10.132.30">
    <property type="match status" value="1"/>
</dbReference>
<dbReference type="Gene3D" id="1.10.150.390">
    <property type="match status" value="1"/>
</dbReference>
<dbReference type="Gene3D" id="1.10.1790.20">
    <property type="match status" value="1"/>
</dbReference>
<dbReference type="Gene3D" id="1.10.40.90">
    <property type="match status" value="1"/>
</dbReference>
<dbReference type="Gene3D" id="2.40.40.20">
    <property type="match status" value="1"/>
</dbReference>
<dbReference type="Gene3D" id="2.40.50.100">
    <property type="match status" value="2"/>
</dbReference>
<dbReference type="Gene3D" id="4.10.860.120">
    <property type="entry name" value="RNA polymerase II, clamp domain"/>
    <property type="match status" value="1"/>
</dbReference>
<dbReference type="Gene3D" id="1.10.274.100">
    <property type="entry name" value="RNA polymerase Rpb1, domain 3"/>
    <property type="match status" value="2"/>
</dbReference>
<dbReference type="HAMAP" id="MF_01322">
    <property type="entry name" value="RNApol_bact_RpoC"/>
    <property type="match status" value="1"/>
</dbReference>
<dbReference type="InterPro" id="IPR045867">
    <property type="entry name" value="DNA-dir_RpoC_beta_prime"/>
</dbReference>
<dbReference type="InterPro" id="IPR012754">
    <property type="entry name" value="DNA-dir_RpoC_beta_prime_bact"/>
</dbReference>
<dbReference type="InterPro" id="IPR000722">
    <property type="entry name" value="RNA_pol_asu"/>
</dbReference>
<dbReference type="InterPro" id="IPR006592">
    <property type="entry name" value="RNA_pol_N"/>
</dbReference>
<dbReference type="InterPro" id="IPR007080">
    <property type="entry name" value="RNA_pol_Rpb1_1"/>
</dbReference>
<dbReference type="InterPro" id="IPR007066">
    <property type="entry name" value="RNA_pol_Rpb1_3"/>
</dbReference>
<dbReference type="InterPro" id="IPR042102">
    <property type="entry name" value="RNA_pol_Rpb1_3_sf"/>
</dbReference>
<dbReference type="InterPro" id="IPR007083">
    <property type="entry name" value="RNA_pol_Rpb1_4"/>
</dbReference>
<dbReference type="InterPro" id="IPR007081">
    <property type="entry name" value="RNA_pol_Rpb1_5"/>
</dbReference>
<dbReference type="InterPro" id="IPR044893">
    <property type="entry name" value="RNA_pol_Rpb1_clamp_domain"/>
</dbReference>
<dbReference type="InterPro" id="IPR038120">
    <property type="entry name" value="Rpb1_funnel_sf"/>
</dbReference>
<dbReference type="InterPro" id="IPR011054">
    <property type="entry name" value="Rudment_hybrid_motif"/>
</dbReference>
<dbReference type="NCBIfam" id="TIGR02386">
    <property type="entry name" value="rpoC_TIGR"/>
    <property type="match status" value="1"/>
</dbReference>
<dbReference type="PANTHER" id="PTHR19376">
    <property type="entry name" value="DNA-DIRECTED RNA POLYMERASE"/>
    <property type="match status" value="1"/>
</dbReference>
<dbReference type="PANTHER" id="PTHR19376:SF54">
    <property type="entry name" value="DNA-DIRECTED RNA POLYMERASE SUBUNIT BETA"/>
    <property type="match status" value="1"/>
</dbReference>
<dbReference type="Pfam" id="PF04997">
    <property type="entry name" value="RNA_pol_Rpb1_1"/>
    <property type="match status" value="1"/>
</dbReference>
<dbReference type="Pfam" id="PF00623">
    <property type="entry name" value="RNA_pol_Rpb1_2"/>
    <property type="match status" value="2"/>
</dbReference>
<dbReference type="Pfam" id="PF04983">
    <property type="entry name" value="RNA_pol_Rpb1_3"/>
    <property type="match status" value="1"/>
</dbReference>
<dbReference type="Pfam" id="PF05000">
    <property type="entry name" value="RNA_pol_Rpb1_4"/>
    <property type="match status" value="1"/>
</dbReference>
<dbReference type="Pfam" id="PF04998">
    <property type="entry name" value="RNA_pol_Rpb1_5"/>
    <property type="match status" value="1"/>
</dbReference>
<dbReference type="SMART" id="SM00663">
    <property type="entry name" value="RPOLA_N"/>
    <property type="match status" value="1"/>
</dbReference>
<dbReference type="SUPFAM" id="SSF64484">
    <property type="entry name" value="beta and beta-prime subunits of DNA dependent RNA-polymerase"/>
    <property type="match status" value="1"/>
</dbReference>
<dbReference type="SUPFAM" id="SSF51246">
    <property type="entry name" value="Rudiment single hybrid motif"/>
    <property type="match status" value="1"/>
</dbReference>
<sequence>MNEVNDFDAIRISLASPDQIRSWSYGEVTKPETINYRTLKPERDGLFCERIFGPIKDFECACGKYKRIRYKGIICDKCGVEIARAKVRRERMGHIELACPVGHIWFTRGIPSRVGLLLNLSTRSLERIIYYSHFIITGVNDEAREKAIKDLEVISSQRVADKGSEVDTRVAQMEAEDATVEAINQVRRDFSTEREQMEEDIQLLIDQLKDLQIGNLLTENQYYELKQRFSNVFEASMGAEALLKLLSYIDMDKERSKLIQETRSTSGQRRKKAGKQLQLVEAFRRSSNKPEWMIMTVLPVLPPDLRPMVQLDGGRFATSDLNDLYRRVINRNNRLQHLMEIGAPEIIIRNEKRMLQEAVDSLIDNGRRGKSVAVNGDHKAKSLSDLLRGKQGRFRQNLLGKRVDYSGRSVIVVGPSLKLSQCGLPRRMALELFKPFVMHRLVRDGLAPNIKSARRLVERARPEVYDILEEVVKERPVMLNRAPTLHRLSIQAFEPVLIDGSALRLHPLVCSAFNADFDGDQMAVHVPLSKAAVKEARETMLSIHNMMLPSSGEPVVSPSLDMVFGCYYLTTTRPGAKGEGKIFSDFEEAKHYYEMGIIDLRAIIKVRDGKGNMLETTTGRIIFNDVLPKEVEFQNMDIPKSAIKKIIGRCYKILSSQDMAVMLDKIKQLGFKYATSSGISIAMSDISVPREKAKLVAAADERTAISEGQFARGLITEDERYNSIIETWMETTDRITDAIQAGFDKQGSVYMMANSGAKGNISQIRQMAGLRGLMTNPSGRIIDFPIKSSLREGLTTLEYFISTHGARKGLADTALRTSGSGYLTRRLIDVTQDVIILQEDCGTSNGTWIVEPKEKGMLPPLVDRVLGRWAAHNVVHPQTGEIIVGNNEEIDEAKAKAIGEAGITEVFVRSPLTCEATHGMCRRCYGRDLGRVRLVDMNTAVGIIAAQSIGEPGTQLTLRTFHTGGVVGVDITTGLPRVEELFEARPPKVQSIISEIDGEAEVIENENGRHIRIFSDEVYQDEYELPSGWKTQVQSGQWVDSGMVLASPEMEGKSKAVVQSDQNVVARVAGEVSVDGSLITIKYSESEEREYAIPAAMQIKVKTGDSVRAGQQLTDGSINPQDILSILGRDAVQKYLVEEVQKVYYSQGVHINDKHIEVIARQMLIKVRIDSSGDTDLVPGELVDKFRYEDINAKVLAEGGEPATAHTVLMGITRASLSTESWLAAASFQETTRVLTDAAIYGKVDKLSGLKENVIIGKLIPAQCKSCKEATVERAERIAAAAAAPAVSTLPENCL</sequence>
<keyword id="KW-0240">DNA-directed RNA polymerase</keyword>
<keyword id="KW-0460">Magnesium</keyword>
<keyword id="KW-0479">Metal-binding</keyword>
<keyword id="KW-0548">Nucleotidyltransferase</keyword>
<keyword id="KW-0804">Transcription</keyword>
<keyword id="KW-0808">Transferase</keyword>
<keyword id="KW-0862">Zinc</keyword>